<reference key="1">
    <citation type="journal article" date="2002" name="Environ. Microbiol.">
        <title>Complete genome sequence and comparative analysis of the metabolically versatile Pseudomonas putida KT2440.</title>
        <authorList>
            <person name="Nelson K.E."/>
            <person name="Weinel C."/>
            <person name="Paulsen I.T."/>
            <person name="Dodson R.J."/>
            <person name="Hilbert H."/>
            <person name="Martins dos Santos V.A.P."/>
            <person name="Fouts D.E."/>
            <person name="Gill S.R."/>
            <person name="Pop M."/>
            <person name="Holmes M."/>
            <person name="Brinkac L.M."/>
            <person name="Beanan M.J."/>
            <person name="DeBoy R.T."/>
            <person name="Daugherty S.C."/>
            <person name="Kolonay J.F."/>
            <person name="Madupu R."/>
            <person name="Nelson W.C."/>
            <person name="White O."/>
            <person name="Peterson J.D."/>
            <person name="Khouri H.M."/>
            <person name="Hance I."/>
            <person name="Chris Lee P."/>
            <person name="Holtzapple E.K."/>
            <person name="Scanlan D."/>
            <person name="Tran K."/>
            <person name="Moazzez A."/>
            <person name="Utterback T.R."/>
            <person name="Rizzo M."/>
            <person name="Lee K."/>
            <person name="Kosack D."/>
            <person name="Moestl D."/>
            <person name="Wedler H."/>
            <person name="Lauber J."/>
            <person name="Stjepandic D."/>
            <person name="Hoheisel J."/>
            <person name="Straetz M."/>
            <person name="Heim S."/>
            <person name="Kiewitz C."/>
            <person name="Eisen J.A."/>
            <person name="Timmis K.N."/>
            <person name="Duesterhoeft A."/>
            <person name="Tuemmler B."/>
            <person name="Fraser C.M."/>
        </authorList>
    </citation>
    <scope>NUCLEOTIDE SEQUENCE [LARGE SCALE GENOMIC DNA]</scope>
    <source>
        <strain>ATCC 47054 / DSM 6125 / CFBP 8728 / NCIMB 11950 / KT2440</strain>
    </source>
</reference>
<keyword id="KW-0378">Hydrolase</keyword>
<keyword id="KW-0479">Metal-binding</keyword>
<keyword id="KW-0546">Nucleotide metabolism</keyword>
<keyword id="KW-1185">Reference proteome</keyword>
<keyword id="KW-0862">Zinc</keyword>
<comment type="function">
    <text evidence="1">Catalyzes the hydrolytic deamination of adenine to hypoxanthine. Plays an important role in the purine salvage pathway and in nitrogen catabolism.</text>
</comment>
<comment type="catalytic activity">
    <reaction evidence="1">
        <text>adenine + H2O + H(+) = hypoxanthine + NH4(+)</text>
        <dbReference type="Rhea" id="RHEA:23688"/>
        <dbReference type="ChEBI" id="CHEBI:15377"/>
        <dbReference type="ChEBI" id="CHEBI:15378"/>
        <dbReference type="ChEBI" id="CHEBI:16708"/>
        <dbReference type="ChEBI" id="CHEBI:17368"/>
        <dbReference type="ChEBI" id="CHEBI:28938"/>
        <dbReference type="EC" id="3.5.4.2"/>
    </reaction>
</comment>
<comment type="cofactor">
    <cofactor evidence="1">
        <name>Zn(2+)</name>
        <dbReference type="ChEBI" id="CHEBI:29105"/>
    </cofactor>
    <text evidence="1">Binds 1 zinc ion per subunit.</text>
</comment>
<comment type="similarity">
    <text evidence="1">Belongs to the metallo-dependent hydrolases superfamily. Adenosine and AMP deaminases family. Adenine deaminase type 2 subfamily.</text>
</comment>
<evidence type="ECO:0000255" key="1">
    <source>
        <dbReference type="HAMAP-Rule" id="MF_01962"/>
    </source>
</evidence>
<accession>Q88QA3</accession>
<proteinExistence type="inferred from homology"/>
<dbReference type="EC" id="3.5.4.2" evidence="1"/>
<dbReference type="EMBL" id="AE015451">
    <property type="protein sequence ID" value="AAN66218.1"/>
    <property type="molecule type" value="Genomic_DNA"/>
</dbReference>
<dbReference type="RefSeq" id="NP_742754.1">
    <property type="nucleotide sequence ID" value="NC_002947.4"/>
</dbReference>
<dbReference type="RefSeq" id="WP_010951862.1">
    <property type="nucleotide sequence ID" value="NZ_CP169744.1"/>
</dbReference>
<dbReference type="SMR" id="Q88QA3"/>
<dbReference type="STRING" id="160488.PP_0591"/>
<dbReference type="PaxDb" id="160488-PP_0591"/>
<dbReference type="KEGG" id="ppu:PP_0591"/>
<dbReference type="PATRIC" id="fig|160488.4.peg.630"/>
<dbReference type="eggNOG" id="COG1816">
    <property type="taxonomic scope" value="Bacteria"/>
</dbReference>
<dbReference type="HOGENOM" id="CLU_039228_7_0_6"/>
<dbReference type="OrthoDB" id="105475at2"/>
<dbReference type="PhylomeDB" id="Q88QA3"/>
<dbReference type="BioCyc" id="PPUT160488:G1G01-642-MONOMER"/>
<dbReference type="Proteomes" id="UP000000556">
    <property type="component" value="Chromosome"/>
</dbReference>
<dbReference type="GO" id="GO:0005829">
    <property type="term" value="C:cytosol"/>
    <property type="evidence" value="ECO:0007669"/>
    <property type="project" value="TreeGrafter"/>
</dbReference>
<dbReference type="GO" id="GO:0000034">
    <property type="term" value="F:adenine deaminase activity"/>
    <property type="evidence" value="ECO:0007669"/>
    <property type="project" value="UniProtKB-UniRule"/>
</dbReference>
<dbReference type="GO" id="GO:0008270">
    <property type="term" value="F:zinc ion binding"/>
    <property type="evidence" value="ECO:0007669"/>
    <property type="project" value="UniProtKB-UniRule"/>
</dbReference>
<dbReference type="GO" id="GO:0006146">
    <property type="term" value="P:adenine catabolic process"/>
    <property type="evidence" value="ECO:0007669"/>
    <property type="project" value="UniProtKB-UniRule"/>
</dbReference>
<dbReference type="GO" id="GO:0043103">
    <property type="term" value="P:hypoxanthine salvage"/>
    <property type="evidence" value="ECO:0007669"/>
    <property type="project" value="UniProtKB-UniRule"/>
</dbReference>
<dbReference type="GO" id="GO:0009117">
    <property type="term" value="P:nucleotide metabolic process"/>
    <property type="evidence" value="ECO:0007669"/>
    <property type="project" value="UniProtKB-KW"/>
</dbReference>
<dbReference type="CDD" id="cd01320">
    <property type="entry name" value="ADA"/>
    <property type="match status" value="1"/>
</dbReference>
<dbReference type="FunFam" id="3.20.20.140:FF:000039">
    <property type="entry name" value="Adenine deaminase"/>
    <property type="match status" value="1"/>
</dbReference>
<dbReference type="Gene3D" id="3.20.20.140">
    <property type="entry name" value="Metal-dependent hydrolases"/>
    <property type="match status" value="1"/>
</dbReference>
<dbReference type="HAMAP" id="MF_01962">
    <property type="entry name" value="Adenine_deaminase"/>
    <property type="match status" value="1"/>
</dbReference>
<dbReference type="InterPro" id="IPR001365">
    <property type="entry name" value="A_deaminase_dom"/>
</dbReference>
<dbReference type="InterPro" id="IPR028892">
    <property type="entry name" value="ADE"/>
</dbReference>
<dbReference type="InterPro" id="IPR006330">
    <property type="entry name" value="Ado/ade_deaminase"/>
</dbReference>
<dbReference type="InterPro" id="IPR032466">
    <property type="entry name" value="Metal_Hydrolase"/>
</dbReference>
<dbReference type="NCBIfam" id="TIGR01430">
    <property type="entry name" value="aden_deam"/>
    <property type="match status" value="1"/>
</dbReference>
<dbReference type="NCBIfam" id="NF006850">
    <property type="entry name" value="PRK09358.1-6"/>
    <property type="match status" value="1"/>
</dbReference>
<dbReference type="PANTHER" id="PTHR43114">
    <property type="entry name" value="ADENINE DEAMINASE"/>
    <property type="match status" value="1"/>
</dbReference>
<dbReference type="PANTHER" id="PTHR43114:SF6">
    <property type="entry name" value="ADENINE DEAMINASE"/>
    <property type="match status" value="1"/>
</dbReference>
<dbReference type="Pfam" id="PF00962">
    <property type="entry name" value="A_deaminase"/>
    <property type="match status" value="1"/>
</dbReference>
<dbReference type="SUPFAM" id="SSF51556">
    <property type="entry name" value="Metallo-dependent hydrolases"/>
    <property type="match status" value="1"/>
</dbReference>
<name>ADE_PSEPK</name>
<sequence length="315" mass="35846">MYDWLNALPKAELHLHLEGSLEPELLFALAERNKIALPWADVETLRGAYAFNNLQEFLDLYYQGADVLRTEQDFYDLTWAYLQRCKAQNVIHTEPFFDPQTHTDRGIAFEVVLNGISQALKDGREQLGISSGLILSFLRHLSEDEAQKTLDQALPFRDAFIAVGLDSSEMGHPPSKFQRVFDRARSEGFVAVAHAGEEGPPEYIWEALDLLKIKRIDHGVRAIEDERLMQRIIDEQIPLTVCPLSNTKLCVFDHMSQHNILDMLERGVKVTVNSDDPAYFGGYVTENFHALHTHLGMTEDQARRLAQNSLDARLV</sequence>
<gene>
    <name type="ordered locus">PP_0591</name>
</gene>
<protein>
    <recommendedName>
        <fullName evidence="1">Adenine deaminase</fullName>
        <shortName evidence="1">ADE</shortName>
        <ecNumber evidence="1">3.5.4.2</ecNumber>
    </recommendedName>
    <alternativeName>
        <fullName evidence="1">Adenine aminohydrolase</fullName>
        <shortName evidence="1">AAH</shortName>
    </alternativeName>
</protein>
<organism>
    <name type="scientific">Pseudomonas putida (strain ATCC 47054 / DSM 6125 / CFBP 8728 / NCIMB 11950 / KT2440)</name>
    <dbReference type="NCBI Taxonomy" id="160488"/>
    <lineage>
        <taxon>Bacteria</taxon>
        <taxon>Pseudomonadati</taxon>
        <taxon>Pseudomonadota</taxon>
        <taxon>Gammaproteobacteria</taxon>
        <taxon>Pseudomonadales</taxon>
        <taxon>Pseudomonadaceae</taxon>
        <taxon>Pseudomonas</taxon>
    </lineage>
</organism>
<feature type="chain" id="PRO_0000194378" description="Adenine deaminase">
    <location>
        <begin position="1"/>
        <end position="315"/>
    </location>
</feature>
<feature type="active site" description="Proton donor" evidence="1">
    <location>
        <position position="197"/>
    </location>
</feature>
<feature type="binding site" evidence="1">
    <location>
        <position position="14"/>
    </location>
    <ligand>
        <name>Zn(2+)</name>
        <dbReference type="ChEBI" id="CHEBI:29105"/>
        <note>catalytic</note>
    </ligand>
</feature>
<feature type="binding site" evidence="1">
    <location>
        <position position="16"/>
    </location>
    <ligand>
        <name>Zn(2+)</name>
        <dbReference type="ChEBI" id="CHEBI:29105"/>
        <note>catalytic</note>
    </ligand>
</feature>
<feature type="binding site" evidence="1">
    <location>
        <position position="194"/>
    </location>
    <ligand>
        <name>Zn(2+)</name>
        <dbReference type="ChEBI" id="CHEBI:29105"/>
        <note>catalytic</note>
    </ligand>
</feature>
<feature type="binding site" evidence="1">
    <location>
        <position position="275"/>
    </location>
    <ligand>
        <name>Zn(2+)</name>
        <dbReference type="ChEBI" id="CHEBI:29105"/>
        <note>catalytic</note>
    </ligand>
</feature>
<feature type="binding site" evidence="1">
    <location>
        <position position="276"/>
    </location>
    <ligand>
        <name>substrate</name>
    </ligand>
</feature>
<feature type="site" description="Important for catalytic activity" evidence="1">
    <location>
        <position position="218"/>
    </location>
</feature>